<comment type="function">
    <text evidence="1">Involved in a nucleolar function.</text>
</comment>
<comment type="subcellular location">
    <subcellularLocation>
        <location evidence="1">Nucleus</location>
        <location evidence="1">Nucleolus</location>
    </subcellularLocation>
</comment>
<comment type="similarity">
    <text evidence="3">Belongs to the SURF6 family.</text>
</comment>
<protein>
    <recommendedName>
        <fullName>Surfeit locus protein 6 homolog</fullName>
    </recommendedName>
</protein>
<feature type="chain" id="PRO_0000356273" description="Surfeit locus protein 6 homolog">
    <location>
        <begin position="1"/>
        <end position="396"/>
    </location>
</feature>
<feature type="region of interest" description="Disordered" evidence="2">
    <location>
        <begin position="26"/>
        <end position="225"/>
    </location>
</feature>
<feature type="region of interest" description="Disordered" evidence="2">
    <location>
        <begin position="341"/>
        <end position="396"/>
    </location>
</feature>
<feature type="compositionally biased region" description="Polar residues" evidence="2">
    <location>
        <begin position="27"/>
        <end position="37"/>
    </location>
</feature>
<feature type="compositionally biased region" description="Low complexity" evidence="2">
    <location>
        <begin position="46"/>
        <end position="55"/>
    </location>
</feature>
<feature type="compositionally biased region" description="Low complexity" evidence="2">
    <location>
        <begin position="65"/>
        <end position="81"/>
    </location>
</feature>
<feature type="compositionally biased region" description="Low complexity" evidence="2">
    <location>
        <begin position="114"/>
        <end position="131"/>
    </location>
</feature>
<feature type="compositionally biased region" description="Basic and acidic residues" evidence="2">
    <location>
        <begin position="132"/>
        <end position="150"/>
    </location>
</feature>
<feature type="compositionally biased region" description="Acidic residues" evidence="2">
    <location>
        <begin position="151"/>
        <end position="174"/>
    </location>
</feature>
<feature type="compositionally biased region" description="Acidic residues" evidence="2">
    <location>
        <begin position="187"/>
        <end position="196"/>
    </location>
</feature>
<feature type="compositionally biased region" description="Basic and acidic residues" evidence="2">
    <location>
        <begin position="210"/>
        <end position="220"/>
    </location>
</feature>
<feature type="compositionally biased region" description="Basic and acidic residues" evidence="2">
    <location>
        <begin position="341"/>
        <end position="351"/>
    </location>
</feature>
<feature type="compositionally biased region" description="Basic residues" evidence="2">
    <location>
        <begin position="385"/>
        <end position="396"/>
    </location>
</feature>
<gene>
    <name type="primary">surf6</name>
    <name type="ORF">DDB_G0290425</name>
</gene>
<evidence type="ECO:0000250" key="1"/>
<evidence type="ECO:0000256" key="2">
    <source>
        <dbReference type="SAM" id="MobiDB-lite"/>
    </source>
</evidence>
<evidence type="ECO:0000305" key="3"/>
<dbReference type="EMBL" id="AAFI02000163">
    <property type="protein sequence ID" value="EAL62228.1"/>
    <property type="molecule type" value="Genomic_DNA"/>
</dbReference>
<dbReference type="RefSeq" id="XP_635734.1">
    <property type="nucleotide sequence ID" value="XM_630642.1"/>
</dbReference>
<dbReference type="SMR" id="Q54G38"/>
<dbReference type="FunCoup" id="Q54G38">
    <property type="interactions" value="21"/>
</dbReference>
<dbReference type="STRING" id="44689.Q54G38"/>
<dbReference type="PaxDb" id="44689-DDB0188884"/>
<dbReference type="EnsemblProtists" id="EAL62228">
    <property type="protein sequence ID" value="EAL62228"/>
    <property type="gene ID" value="DDB_G0290425"/>
</dbReference>
<dbReference type="GeneID" id="8627652"/>
<dbReference type="KEGG" id="ddi:DDB_G0290425"/>
<dbReference type="dictyBase" id="DDB_G0290425"/>
<dbReference type="VEuPathDB" id="AmoebaDB:DDB_G0290425"/>
<dbReference type="eggNOG" id="KOG2885">
    <property type="taxonomic scope" value="Eukaryota"/>
</dbReference>
<dbReference type="HOGENOM" id="CLU_697238_0_0_1"/>
<dbReference type="InParanoid" id="Q54G38"/>
<dbReference type="OMA" id="MSSMFNI"/>
<dbReference type="PRO" id="PR:Q54G38"/>
<dbReference type="Proteomes" id="UP000002195">
    <property type="component" value="Chromosome 5"/>
</dbReference>
<dbReference type="GO" id="GO:0005730">
    <property type="term" value="C:nucleolus"/>
    <property type="evidence" value="ECO:0000318"/>
    <property type="project" value="GO_Central"/>
</dbReference>
<dbReference type="GO" id="GO:0003677">
    <property type="term" value="F:DNA binding"/>
    <property type="evidence" value="ECO:0000318"/>
    <property type="project" value="GO_Central"/>
</dbReference>
<dbReference type="GO" id="GO:0003723">
    <property type="term" value="F:RNA binding"/>
    <property type="evidence" value="ECO:0000318"/>
    <property type="project" value="GO_Central"/>
</dbReference>
<dbReference type="GO" id="GO:0042273">
    <property type="term" value="P:ribosomal large subunit biogenesis"/>
    <property type="evidence" value="ECO:0000318"/>
    <property type="project" value="GO_Central"/>
</dbReference>
<dbReference type="GO" id="GO:0042274">
    <property type="term" value="P:ribosomal small subunit biogenesis"/>
    <property type="evidence" value="ECO:0000318"/>
    <property type="project" value="GO_Central"/>
</dbReference>
<dbReference type="InterPro" id="IPR029190">
    <property type="entry name" value="Rrp14/SURF6_C"/>
</dbReference>
<dbReference type="InterPro" id="IPR007019">
    <property type="entry name" value="SURF6"/>
</dbReference>
<dbReference type="PANTHER" id="PTHR14369">
    <property type="entry name" value="SURFEIT LOCUS PROTEIN 6"/>
    <property type="match status" value="1"/>
</dbReference>
<dbReference type="PANTHER" id="PTHR14369:SF0">
    <property type="entry name" value="SURFEIT LOCUS PROTEIN 6"/>
    <property type="match status" value="1"/>
</dbReference>
<dbReference type="Pfam" id="PF04935">
    <property type="entry name" value="SURF6"/>
    <property type="match status" value="1"/>
</dbReference>
<proteinExistence type="inferred from homology"/>
<accession>Q54G38</accession>
<organism>
    <name type="scientific">Dictyostelium discoideum</name>
    <name type="common">Social amoeba</name>
    <dbReference type="NCBI Taxonomy" id="44689"/>
    <lineage>
        <taxon>Eukaryota</taxon>
        <taxon>Amoebozoa</taxon>
        <taxon>Evosea</taxon>
        <taxon>Eumycetozoa</taxon>
        <taxon>Dictyostelia</taxon>
        <taxon>Dictyosteliales</taxon>
        <taxon>Dictyosteliaceae</taxon>
        <taxon>Dictyostelium</taxon>
    </lineage>
</organism>
<name>SURF6_DICDI</name>
<keyword id="KW-0539">Nucleus</keyword>
<keyword id="KW-1185">Reference proteome</keyword>
<reference key="1">
    <citation type="journal article" date="2005" name="Nature">
        <title>The genome of the social amoeba Dictyostelium discoideum.</title>
        <authorList>
            <person name="Eichinger L."/>
            <person name="Pachebat J.A."/>
            <person name="Gloeckner G."/>
            <person name="Rajandream M.A."/>
            <person name="Sucgang R."/>
            <person name="Berriman M."/>
            <person name="Song J."/>
            <person name="Olsen R."/>
            <person name="Szafranski K."/>
            <person name="Xu Q."/>
            <person name="Tunggal B."/>
            <person name="Kummerfeld S."/>
            <person name="Madera M."/>
            <person name="Konfortov B.A."/>
            <person name="Rivero F."/>
            <person name="Bankier A.T."/>
            <person name="Lehmann R."/>
            <person name="Hamlin N."/>
            <person name="Davies R."/>
            <person name="Gaudet P."/>
            <person name="Fey P."/>
            <person name="Pilcher K."/>
            <person name="Chen G."/>
            <person name="Saunders D."/>
            <person name="Sodergren E.J."/>
            <person name="Davis P."/>
            <person name="Kerhornou A."/>
            <person name="Nie X."/>
            <person name="Hall N."/>
            <person name="Anjard C."/>
            <person name="Hemphill L."/>
            <person name="Bason N."/>
            <person name="Farbrother P."/>
            <person name="Desany B."/>
            <person name="Just E."/>
            <person name="Morio T."/>
            <person name="Rost R."/>
            <person name="Churcher C.M."/>
            <person name="Cooper J."/>
            <person name="Haydock S."/>
            <person name="van Driessche N."/>
            <person name="Cronin A."/>
            <person name="Goodhead I."/>
            <person name="Muzny D.M."/>
            <person name="Mourier T."/>
            <person name="Pain A."/>
            <person name="Lu M."/>
            <person name="Harper D."/>
            <person name="Lindsay R."/>
            <person name="Hauser H."/>
            <person name="James K.D."/>
            <person name="Quiles M."/>
            <person name="Madan Babu M."/>
            <person name="Saito T."/>
            <person name="Buchrieser C."/>
            <person name="Wardroper A."/>
            <person name="Felder M."/>
            <person name="Thangavelu M."/>
            <person name="Johnson D."/>
            <person name="Knights A."/>
            <person name="Loulseged H."/>
            <person name="Mungall K.L."/>
            <person name="Oliver K."/>
            <person name="Price C."/>
            <person name="Quail M.A."/>
            <person name="Urushihara H."/>
            <person name="Hernandez J."/>
            <person name="Rabbinowitsch E."/>
            <person name="Steffen D."/>
            <person name="Sanders M."/>
            <person name="Ma J."/>
            <person name="Kohara Y."/>
            <person name="Sharp S."/>
            <person name="Simmonds M.N."/>
            <person name="Spiegler S."/>
            <person name="Tivey A."/>
            <person name="Sugano S."/>
            <person name="White B."/>
            <person name="Walker D."/>
            <person name="Woodward J.R."/>
            <person name="Winckler T."/>
            <person name="Tanaka Y."/>
            <person name="Shaulsky G."/>
            <person name="Schleicher M."/>
            <person name="Weinstock G.M."/>
            <person name="Rosenthal A."/>
            <person name="Cox E.C."/>
            <person name="Chisholm R.L."/>
            <person name="Gibbs R.A."/>
            <person name="Loomis W.F."/>
            <person name="Platzer M."/>
            <person name="Kay R.R."/>
            <person name="Williams J.G."/>
            <person name="Dear P.H."/>
            <person name="Noegel A.A."/>
            <person name="Barrell B.G."/>
            <person name="Kuspa A."/>
        </authorList>
    </citation>
    <scope>NUCLEOTIDE SEQUENCE [LARGE SCALE GENOMIC DNA]</scope>
    <source>
        <strain>AX4</strain>
    </source>
</reference>
<sequence>MSDLKSRLKETSNWMSSMFNIIKDPTSESASFSNRVNSVAPPPRRSSSSSSISFSELTNSNENKTTTTTTTTTTSTTATTSQPPQKSPVEQNKEELKKLLQQQLAEMKLKRQGKNSNINDSNNSNNNNNNTDKNKNDNKKEIIKNKKIKEEEESEGEEVEEEEEEESDISDSEDNNSSNNNGSLNGDYDDYGDEISESGSEMDLINNKNLNKEKRKKQEEDLQFSTFDFSSGKAMPTYLMNKGRKTSKKELLEKAEEKERILANSKRNGTNKELADTIRWSTAFDKVQGIKVKDDPALLRKSIKKVEKTKLKSAREWVQRKKEKDEKLKVRIAKREANIKAKIEEKKERRMGIKKKKTNNNNNKSGGGGGNSHASRQRAGFEGKKKFHFNPKKLIN</sequence>